<organism>
    <name type="scientific">Homo sapiens</name>
    <name type="common">Human</name>
    <dbReference type="NCBI Taxonomy" id="9606"/>
    <lineage>
        <taxon>Eukaryota</taxon>
        <taxon>Metazoa</taxon>
        <taxon>Chordata</taxon>
        <taxon>Craniata</taxon>
        <taxon>Vertebrata</taxon>
        <taxon>Euteleostomi</taxon>
        <taxon>Mammalia</taxon>
        <taxon>Eutheria</taxon>
        <taxon>Euarchontoglires</taxon>
        <taxon>Primates</taxon>
        <taxon>Haplorrhini</taxon>
        <taxon>Catarrhini</taxon>
        <taxon>Hominidae</taxon>
        <taxon>Homo</taxon>
    </lineage>
</organism>
<dbReference type="EC" id="3.4.24.-"/>
<dbReference type="EMBL" id="AF170084">
    <property type="protein sequence ID" value="AAF15317.1"/>
    <property type="molecule type" value="mRNA"/>
</dbReference>
<dbReference type="EMBL" id="AF060152">
    <property type="protein sequence ID" value="AAD48080.1"/>
    <property type="status" value="ALT_INIT"/>
    <property type="molecule type" value="mRNA"/>
</dbReference>
<dbReference type="EMBL" id="AF207664">
    <property type="protein sequence ID" value="AAF23772.1"/>
    <property type="molecule type" value="mRNA"/>
</dbReference>
<dbReference type="EMBL" id="AB037767">
    <property type="protein sequence ID" value="BAA92584.1"/>
    <property type="status" value="ALT_INIT"/>
    <property type="molecule type" value="mRNA"/>
</dbReference>
<dbReference type="EMBL" id="AP001697">
    <property type="protein sequence ID" value="BAA95502.1"/>
    <property type="molecule type" value="Genomic_DNA"/>
</dbReference>
<dbReference type="EMBL" id="CH471079">
    <property type="protein sequence ID" value="EAX09951.1"/>
    <property type="molecule type" value="Genomic_DNA"/>
</dbReference>
<dbReference type="EMBL" id="CH471079">
    <property type="protein sequence ID" value="EAX09952.1"/>
    <property type="molecule type" value="Genomic_DNA"/>
</dbReference>
<dbReference type="EMBL" id="AL162080">
    <property type="protein sequence ID" value="CAB82413.1"/>
    <property type="molecule type" value="mRNA"/>
</dbReference>
<dbReference type="CCDS" id="CCDS33524.1"/>
<dbReference type="PIR" id="T47158">
    <property type="entry name" value="T47158"/>
</dbReference>
<dbReference type="RefSeq" id="NP_008919.3">
    <property type="nucleotide sequence ID" value="NM_006988.4"/>
</dbReference>
<dbReference type="PDB" id="2JIH">
    <property type="method" value="X-ray"/>
    <property type="resolution" value="2.10 A"/>
    <property type="chains" value="A/B=253-548"/>
</dbReference>
<dbReference type="PDB" id="2V4B">
    <property type="method" value="X-ray"/>
    <property type="resolution" value="2.00 A"/>
    <property type="chains" value="A/B=253-548"/>
</dbReference>
<dbReference type="PDB" id="3Q2G">
    <property type="method" value="X-ray"/>
    <property type="resolution" value="2.30 A"/>
    <property type="chains" value="A/B=256-548"/>
</dbReference>
<dbReference type="PDB" id="3Q2H">
    <property type="method" value="X-ray"/>
    <property type="resolution" value="2.33 A"/>
    <property type="chains" value="A/B=256-548"/>
</dbReference>
<dbReference type="PDBsum" id="2JIH"/>
<dbReference type="PDBsum" id="2V4B"/>
<dbReference type="PDBsum" id="3Q2G"/>
<dbReference type="PDBsum" id="3Q2H"/>
<dbReference type="SMR" id="Q9UHI8"/>
<dbReference type="BioGRID" id="114888">
    <property type="interactions" value="95"/>
</dbReference>
<dbReference type="FunCoup" id="Q9UHI8">
    <property type="interactions" value="376"/>
</dbReference>
<dbReference type="IntAct" id="Q9UHI8">
    <property type="interactions" value="65"/>
</dbReference>
<dbReference type="MINT" id="Q9UHI8"/>
<dbReference type="STRING" id="9606.ENSP00000284984"/>
<dbReference type="BindingDB" id="Q9UHI8"/>
<dbReference type="ChEMBL" id="CHEMBL5133"/>
<dbReference type="GuidetoPHARMACOLOGY" id="1674"/>
<dbReference type="MEROPS" id="M12.222"/>
<dbReference type="TCDB" id="8.A.77.1.6">
    <property type="family name" value="the sheddase (sheddase) family"/>
</dbReference>
<dbReference type="CarbonylDB" id="Q9UHI8"/>
<dbReference type="GlyCosmos" id="Q9UHI8">
    <property type="glycosylation" value="4 sites, 1 glycan"/>
</dbReference>
<dbReference type="GlyGen" id="Q9UHI8">
    <property type="glycosylation" value="7 sites, 1 N-linked glycan (1 site), 3 O-linked glycans (4 sites)"/>
</dbReference>
<dbReference type="iPTMnet" id="Q9UHI8"/>
<dbReference type="PhosphoSitePlus" id="Q9UHI8"/>
<dbReference type="SwissPalm" id="Q9UHI8"/>
<dbReference type="BioMuta" id="ADAMTS1"/>
<dbReference type="DMDM" id="124053460"/>
<dbReference type="jPOST" id="Q9UHI8"/>
<dbReference type="MassIVE" id="Q9UHI8"/>
<dbReference type="PaxDb" id="9606-ENSP00000284984"/>
<dbReference type="PeptideAtlas" id="Q9UHI8"/>
<dbReference type="ProteomicsDB" id="84361"/>
<dbReference type="Pumba" id="Q9UHI8"/>
<dbReference type="Antibodypedia" id="4291">
    <property type="antibodies" value="415 antibodies from 33 providers"/>
</dbReference>
<dbReference type="DNASU" id="9510"/>
<dbReference type="Ensembl" id="ENST00000284984.8">
    <property type="protein sequence ID" value="ENSP00000284984.2"/>
    <property type="gene ID" value="ENSG00000154734.16"/>
</dbReference>
<dbReference type="GeneID" id="9510"/>
<dbReference type="KEGG" id="hsa:9510"/>
<dbReference type="MANE-Select" id="ENST00000284984.8">
    <property type="protein sequence ID" value="ENSP00000284984.2"/>
    <property type="RefSeq nucleotide sequence ID" value="NM_006988.5"/>
    <property type="RefSeq protein sequence ID" value="NP_008919.3"/>
</dbReference>
<dbReference type="UCSC" id="uc002ymf.4">
    <property type="organism name" value="human"/>
</dbReference>
<dbReference type="AGR" id="HGNC:217"/>
<dbReference type="CTD" id="9510"/>
<dbReference type="DisGeNET" id="9510"/>
<dbReference type="GeneCards" id="ADAMTS1"/>
<dbReference type="HGNC" id="HGNC:217">
    <property type="gene designation" value="ADAMTS1"/>
</dbReference>
<dbReference type="HPA" id="ENSG00000154734">
    <property type="expression patterns" value="Tissue enhanced (ovary)"/>
</dbReference>
<dbReference type="MalaCards" id="ADAMTS1"/>
<dbReference type="MIM" id="605174">
    <property type="type" value="gene"/>
</dbReference>
<dbReference type="neXtProt" id="NX_Q9UHI8"/>
<dbReference type="NIAGADS" id="ENSG00000154734"/>
<dbReference type="OpenTargets" id="ENSG00000154734"/>
<dbReference type="PharmGKB" id="PA24536"/>
<dbReference type="VEuPathDB" id="HostDB:ENSG00000154734"/>
<dbReference type="eggNOG" id="KOG3538">
    <property type="taxonomic scope" value="Eukaryota"/>
</dbReference>
<dbReference type="GeneTree" id="ENSGT00940000156815"/>
<dbReference type="HOGENOM" id="CLU_000660_3_0_1"/>
<dbReference type="InParanoid" id="Q9UHI8"/>
<dbReference type="OMA" id="VNRDSHM"/>
<dbReference type="OrthoDB" id="412680at2759"/>
<dbReference type="PAN-GO" id="Q9UHI8">
    <property type="GO annotations" value="3 GO annotations based on evolutionary models"/>
</dbReference>
<dbReference type="PhylomeDB" id="Q9UHI8"/>
<dbReference type="TreeFam" id="TF331949"/>
<dbReference type="BRENDA" id="3.4.24.B11">
    <property type="organism ID" value="2681"/>
</dbReference>
<dbReference type="BRENDA" id="3.4.24.B12">
    <property type="organism ID" value="2681"/>
</dbReference>
<dbReference type="PathwayCommons" id="Q9UHI8"/>
<dbReference type="Reactome" id="R-HSA-1474228">
    <property type="pathway name" value="Degradation of the extracellular matrix"/>
</dbReference>
<dbReference type="Reactome" id="R-HSA-5083635">
    <property type="pathway name" value="Defective B3GALTL causes PpS"/>
</dbReference>
<dbReference type="Reactome" id="R-HSA-5173214">
    <property type="pathway name" value="O-glycosylation of TSR domain-containing proteins"/>
</dbReference>
<dbReference type="SignaLink" id="Q9UHI8"/>
<dbReference type="SIGNOR" id="Q9UHI8"/>
<dbReference type="BioGRID-ORCS" id="9510">
    <property type="hits" value="8 hits in 1151 CRISPR screens"/>
</dbReference>
<dbReference type="ChiTaRS" id="ADAMTS1">
    <property type="organism name" value="human"/>
</dbReference>
<dbReference type="EvolutionaryTrace" id="Q9UHI8"/>
<dbReference type="GeneWiki" id="ADAMTS1"/>
<dbReference type="GenomeRNAi" id="9510"/>
<dbReference type="Pharos" id="Q9UHI8">
    <property type="development level" value="Tchem"/>
</dbReference>
<dbReference type="PRO" id="PR:Q9UHI8"/>
<dbReference type="Proteomes" id="UP000005640">
    <property type="component" value="Chromosome 21"/>
</dbReference>
<dbReference type="RNAct" id="Q9UHI8">
    <property type="molecule type" value="protein"/>
</dbReference>
<dbReference type="Bgee" id="ENSG00000154734">
    <property type="expression patterns" value="Expressed in right ovary and 193 other cell types or tissues"/>
</dbReference>
<dbReference type="ExpressionAtlas" id="Q9UHI8">
    <property type="expression patterns" value="baseline and differential"/>
</dbReference>
<dbReference type="GO" id="GO:0005604">
    <property type="term" value="C:basement membrane"/>
    <property type="evidence" value="ECO:0007669"/>
    <property type="project" value="Ensembl"/>
</dbReference>
<dbReference type="GO" id="GO:0031410">
    <property type="term" value="C:cytoplasmic vesicle"/>
    <property type="evidence" value="ECO:0007669"/>
    <property type="project" value="Ensembl"/>
</dbReference>
<dbReference type="GO" id="GO:0031012">
    <property type="term" value="C:extracellular matrix"/>
    <property type="evidence" value="ECO:0000318"/>
    <property type="project" value="GO_Central"/>
</dbReference>
<dbReference type="GO" id="GO:0005576">
    <property type="term" value="C:extracellular region"/>
    <property type="evidence" value="ECO:0007669"/>
    <property type="project" value="UniProtKB-KW"/>
</dbReference>
<dbReference type="GO" id="GO:0008201">
    <property type="term" value="F:heparin binding"/>
    <property type="evidence" value="ECO:0007669"/>
    <property type="project" value="UniProtKB-KW"/>
</dbReference>
<dbReference type="GO" id="GO:0004222">
    <property type="term" value="F:metalloendopeptidase activity"/>
    <property type="evidence" value="ECO:0000314"/>
    <property type="project" value="UniProtKB"/>
</dbReference>
<dbReference type="GO" id="GO:0008237">
    <property type="term" value="F:metallopeptidase activity"/>
    <property type="evidence" value="ECO:0000304"/>
    <property type="project" value="ProtInc"/>
</dbReference>
<dbReference type="GO" id="GO:0008270">
    <property type="term" value="F:zinc ion binding"/>
    <property type="evidence" value="ECO:0007669"/>
    <property type="project" value="InterPro"/>
</dbReference>
<dbReference type="GO" id="GO:0030198">
    <property type="term" value="P:extracellular matrix organization"/>
    <property type="evidence" value="ECO:0000318"/>
    <property type="project" value="GO_Central"/>
</dbReference>
<dbReference type="GO" id="GO:0060347">
    <property type="term" value="P:heart trabecula formation"/>
    <property type="evidence" value="ECO:0007669"/>
    <property type="project" value="Ensembl"/>
</dbReference>
<dbReference type="GO" id="GO:0007229">
    <property type="term" value="P:integrin-mediated signaling pathway"/>
    <property type="evidence" value="ECO:0000304"/>
    <property type="project" value="ProtInc"/>
</dbReference>
<dbReference type="GO" id="GO:0001822">
    <property type="term" value="P:kidney development"/>
    <property type="evidence" value="ECO:0007669"/>
    <property type="project" value="Ensembl"/>
</dbReference>
<dbReference type="GO" id="GO:0016525">
    <property type="term" value="P:negative regulation of angiogenesis"/>
    <property type="evidence" value="ECO:0000314"/>
    <property type="project" value="MGI"/>
</dbReference>
<dbReference type="GO" id="GO:0008285">
    <property type="term" value="P:negative regulation of cell population proliferation"/>
    <property type="evidence" value="ECO:0000304"/>
    <property type="project" value="ProtInc"/>
</dbReference>
<dbReference type="GO" id="GO:0001542">
    <property type="term" value="P:ovulation from ovarian follicle"/>
    <property type="evidence" value="ECO:0007669"/>
    <property type="project" value="Ensembl"/>
</dbReference>
<dbReference type="GO" id="GO:1900087">
    <property type="term" value="P:positive regulation of G1/S transition of mitotic cell cycle"/>
    <property type="evidence" value="ECO:0000316"/>
    <property type="project" value="BHF-UCL"/>
</dbReference>
<dbReference type="GO" id="GO:1904754">
    <property type="term" value="P:positive regulation of vascular associated smooth muscle cell migration"/>
    <property type="evidence" value="ECO:0000316"/>
    <property type="project" value="BHF-UCL"/>
</dbReference>
<dbReference type="GO" id="GO:1904707">
    <property type="term" value="P:positive regulation of vascular associated smooth muscle cell proliferation"/>
    <property type="evidence" value="ECO:0000316"/>
    <property type="project" value="BHF-UCL"/>
</dbReference>
<dbReference type="GO" id="GO:0006508">
    <property type="term" value="P:proteolysis"/>
    <property type="evidence" value="ECO:0000318"/>
    <property type="project" value="GO_Central"/>
</dbReference>
<dbReference type="CDD" id="cd04273">
    <property type="entry name" value="ZnMc_ADAMTS_like"/>
    <property type="match status" value="1"/>
</dbReference>
<dbReference type="FunFam" id="2.20.100.10:FF:000006">
    <property type="entry name" value="A disintegrin and metalloproteinase with thrombospondin motifs 1"/>
    <property type="match status" value="1"/>
</dbReference>
<dbReference type="FunFam" id="2.60.120.830:FF:000001">
    <property type="entry name" value="A disintegrin and metalloproteinase with thrombospondin motifs 1"/>
    <property type="match status" value="1"/>
</dbReference>
<dbReference type="FunFam" id="3.40.1620.60:FF:000003">
    <property type="entry name" value="A disintegrin and metalloproteinase with thrombospondin motifs 1"/>
    <property type="match status" value="1"/>
</dbReference>
<dbReference type="FunFam" id="3.40.390.10:FF:000001">
    <property type="entry name" value="A disintegrin and metalloproteinase with thrombospondin motifs 1"/>
    <property type="match status" value="1"/>
</dbReference>
<dbReference type="FunFam" id="2.20.100.10:FF:000048">
    <property type="entry name" value="ADAM metallopeptidase with thrombospondin type 1 motif 8"/>
    <property type="match status" value="1"/>
</dbReference>
<dbReference type="FunFam" id="2.20.100.10:FF:000005">
    <property type="entry name" value="ADAM metallopeptidase with thrombospondin type 1 motif 9"/>
    <property type="match status" value="1"/>
</dbReference>
<dbReference type="Gene3D" id="2.60.120.830">
    <property type="match status" value="1"/>
</dbReference>
<dbReference type="Gene3D" id="3.40.1620.60">
    <property type="match status" value="1"/>
</dbReference>
<dbReference type="Gene3D" id="3.40.390.10">
    <property type="entry name" value="Collagenase (Catalytic Domain)"/>
    <property type="match status" value="1"/>
</dbReference>
<dbReference type="Gene3D" id="2.20.100.10">
    <property type="entry name" value="Thrombospondin type-1 (TSP1) repeat"/>
    <property type="match status" value="3"/>
</dbReference>
<dbReference type="InterPro" id="IPR006586">
    <property type="entry name" value="ADAM_Cys-rich"/>
</dbReference>
<dbReference type="InterPro" id="IPR013273">
    <property type="entry name" value="ADAMTS/ADAMTS-like"/>
</dbReference>
<dbReference type="InterPro" id="IPR050439">
    <property type="entry name" value="ADAMTS_ADAMTS-like"/>
</dbReference>
<dbReference type="InterPro" id="IPR041645">
    <property type="entry name" value="ADAMTS_CR_2"/>
</dbReference>
<dbReference type="InterPro" id="IPR045371">
    <property type="entry name" value="ADAMTS_CR_3"/>
</dbReference>
<dbReference type="InterPro" id="IPR010294">
    <property type="entry name" value="ADAMTS_spacer1"/>
</dbReference>
<dbReference type="InterPro" id="IPR024079">
    <property type="entry name" value="MetalloPept_cat_dom_sf"/>
</dbReference>
<dbReference type="InterPro" id="IPR013274">
    <property type="entry name" value="Pept_M12B_ADAM-TS1"/>
</dbReference>
<dbReference type="InterPro" id="IPR001590">
    <property type="entry name" value="Peptidase_M12B"/>
</dbReference>
<dbReference type="InterPro" id="IPR002870">
    <property type="entry name" value="Peptidase_M12B_N"/>
</dbReference>
<dbReference type="InterPro" id="IPR000884">
    <property type="entry name" value="TSP1_rpt"/>
</dbReference>
<dbReference type="InterPro" id="IPR036383">
    <property type="entry name" value="TSP1_rpt_sf"/>
</dbReference>
<dbReference type="PANTHER" id="PTHR13723:SF40">
    <property type="entry name" value="A DISINTEGRIN AND METALLOPROTEINASE WITH THROMBOSPONDIN MOTIFS 1"/>
    <property type="match status" value="1"/>
</dbReference>
<dbReference type="PANTHER" id="PTHR13723">
    <property type="entry name" value="ADAMTS A DISINTEGRIN AND METALLOPROTEASE WITH THROMBOSPONDIN MOTIFS PROTEASE"/>
    <property type="match status" value="1"/>
</dbReference>
<dbReference type="Pfam" id="PF17771">
    <property type="entry name" value="ADAMTS_CR_2"/>
    <property type="match status" value="1"/>
</dbReference>
<dbReference type="Pfam" id="PF19236">
    <property type="entry name" value="ADAMTS_CR_3"/>
    <property type="match status" value="1"/>
</dbReference>
<dbReference type="Pfam" id="PF05986">
    <property type="entry name" value="ADAMTS_spacer1"/>
    <property type="match status" value="1"/>
</dbReference>
<dbReference type="Pfam" id="PF01562">
    <property type="entry name" value="Pep_M12B_propep"/>
    <property type="match status" value="1"/>
</dbReference>
<dbReference type="Pfam" id="PF01421">
    <property type="entry name" value="Reprolysin"/>
    <property type="match status" value="1"/>
</dbReference>
<dbReference type="Pfam" id="PF19030">
    <property type="entry name" value="TSP1_ADAMTS"/>
    <property type="match status" value="2"/>
</dbReference>
<dbReference type="Pfam" id="PF00090">
    <property type="entry name" value="TSP_1"/>
    <property type="match status" value="1"/>
</dbReference>
<dbReference type="PRINTS" id="PR01858">
    <property type="entry name" value="ADAMTS1"/>
</dbReference>
<dbReference type="PRINTS" id="PR01857">
    <property type="entry name" value="ADAMTSFAMILY"/>
</dbReference>
<dbReference type="SMART" id="SM00608">
    <property type="entry name" value="ACR"/>
    <property type="match status" value="1"/>
</dbReference>
<dbReference type="SMART" id="SM00209">
    <property type="entry name" value="TSP1"/>
    <property type="match status" value="3"/>
</dbReference>
<dbReference type="SUPFAM" id="SSF55486">
    <property type="entry name" value="Metalloproteases ('zincins'), catalytic domain"/>
    <property type="match status" value="1"/>
</dbReference>
<dbReference type="SUPFAM" id="SSF82895">
    <property type="entry name" value="TSP-1 type 1 repeat"/>
    <property type="match status" value="3"/>
</dbReference>
<dbReference type="PROSITE" id="PS50215">
    <property type="entry name" value="ADAM_MEPRO"/>
    <property type="match status" value="1"/>
</dbReference>
<dbReference type="PROSITE" id="PS50092">
    <property type="entry name" value="TSP1"/>
    <property type="match status" value="3"/>
</dbReference>
<dbReference type="PROSITE" id="PS00142">
    <property type="entry name" value="ZINC_PROTEASE"/>
    <property type="match status" value="1"/>
</dbReference>
<proteinExistence type="evidence at protein level"/>
<gene>
    <name type="primary">ADAMTS1</name>
    <name type="synonym">KIAA1346</name>
    <name type="synonym">METH1</name>
</gene>
<reference key="1">
    <citation type="submission" date="1999-07" db="EMBL/GenBank/DDBJ databases">
        <title>Cloning, characterization and mapping on human chromosome 21 of the orthologue of murine Adamts-1.</title>
        <authorList>
            <person name="Casas C."/>
            <person name="Pritchard M.A."/>
            <person name="Estivill X."/>
            <person name="Arbones M.L."/>
        </authorList>
    </citation>
    <scope>NUCLEOTIDE SEQUENCE [MRNA]</scope>
    <scope>VARIANT PRO-227</scope>
</reference>
<reference key="2">
    <citation type="journal article" date="1999" name="J. Biol. Chem.">
        <title>METH-1, a human ortholog of ADAMTS-1, and METH-2 are members of a new family of proteins with angio-inhibitory activity.</title>
        <authorList>
            <person name="Vazquez F."/>
            <person name="Hastings G."/>
            <person name="Ortega M.-A."/>
            <person name="Lane T.F."/>
            <person name="Oikemus S."/>
            <person name="Lombardo M."/>
            <person name="Iruela-Arispe M.L."/>
        </authorList>
    </citation>
    <scope>NUCLEOTIDE SEQUENCE [MRNA]</scope>
    <scope>VARIANT PRO-227</scope>
    <scope>FUNCTION</scope>
    <source>
        <tissue>Heart</tissue>
    </source>
</reference>
<reference key="3">
    <citation type="journal article" date="2000" name="Eur. J. Biochem.">
        <title>Differential gene expression by endothelial cells in distinct angiogenic states.</title>
        <authorList>
            <person name="Glienke J."/>
            <person name="Schmitt A.O."/>
            <person name="Pilarsky C."/>
            <person name="Hinzmann B."/>
            <person name="Weiss B."/>
            <person name="Rosenthal A."/>
            <person name="Thierauch K.H."/>
        </authorList>
    </citation>
    <scope>NUCLEOTIDE SEQUENCE [MRNA]</scope>
    <scope>VARIANT PRO-227</scope>
    <source>
        <tissue>Endothelial cell</tissue>
    </source>
</reference>
<reference key="4">
    <citation type="journal article" date="2000" name="DNA Res.">
        <title>Prediction of the coding sequences of unidentified human genes. XVI. The complete sequences of 150 new cDNA clones from brain which code for large proteins in vitro.</title>
        <authorList>
            <person name="Nagase T."/>
            <person name="Kikuno R."/>
            <person name="Ishikawa K."/>
            <person name="Hirosawa M."/>
            <person name="Ohara O."/>
        </authorList>
    </citation>
    <scope>NUCLEOTIDE SEQUENCE [LARGE SCALE MRNA]</scope>
    <source>
        <tissue>Brain</tissue>
    </source>
</reference>
<reference key="5">
    <citation type="journal article" date="2000" name="Nature">
        <title>The DNA sequence of human chromosome 21.</title>
        <authorList>
            <person name="Hattori M."/>
            <person name="Fujiyama A."/>
            <person name="Taylor T.D."/>
            <person name="Watanabe H."/>
            <person name="Yada T."/>
            <person name="Park H.-S."/>
            <person name="Toyoda A."/>
            <person name="Ishii K."/>
            <person name="Totoki Y."/>
            <person name="Choi D.-K."/>
            <person name="Groner Y."/>
            <person name="Soeda E."/>
            <person name="Ohki M."/>
            <person name="Takagi T."/>
            <person name="Sakaki Y."/>
            <person name="Taudien S."/>
            <person name="Blechschmidt K."/>
            <person name="Polley A."/>
            <person name="Menzel U."/>
            <person name="Delabar J."/>
            <person name="Kumpf K."/>
            <person name="Lehmann R."/>
            <person name="Patterson D."/>
            <person name="Reichwald K."/>
            <person name="Rump A."/>
            <person name="Schillhabel M."/>
            <person name="Schudy A."/>
            <person name="Zimmermann W."/>
            <person name="Rosenthal A."/>
            <person name="Kudoh J."/>
            <person name="Shibuya K."/>
            <person name="Kawasaki K."/>
            <person name="Asakawa S."/>
            <person name="Shintani A."/>
            <person name="Sasaki T."/>
            <person name="Nagamine K."/>
            <person name="Mitsuyama S."/>
            <person name="Antonarakis S.E."/>
            <person name="Minoshima S."/>
            <person name="Shimizu N."/>
            <person name="Nordsiek G."/>
            <person name="Hornischer K."/>
            <person name="Brandt P."/>
            <person name="Scharfe M."/>
            <person name="Schoen O."/>
            <person name="Desario A."/>
            <person name="Reichelt J."/>
            <person name="Kauer G."/>
            <person name="Bloecker H."/>
            <person name="Ramser J."/>
            <person name="Beck A."/>
            <person name="Klages S."/>
            <person name="Hennig S."/>
            <person name="Riesselmann L."/>
            <person name="Dagand E."/>
            <person name="Wehrmeyer S."/>
            <person name="Borzym K."/>
            <person name="Gardiner K."/>
            <person name="Nizetic D."/>
            <person name="Francis F."/>
            <person name="Lehrach H."/>
            <person name="Reinhardt R."/>
            <person name="Yaspo M.-L."/>
        </authorList>
    </citation>
    <scope>NUCLEOTIDE SEQUENCE [LARGE SCALE GENOMIC DNA]</scope>
</reference>
<reference key="6">
    <citation type="submission" date="2005-09" db="EMBL/GenBank/DDBJ databases">
        <authorList>
            <person name="Mural R.J."/>
            <person name="Istrail S."/>
            <person name="Sutton G.G."/>
            <person name="Florea L."/>
            <person name="Halpern A.L."/>
            <person name="Mobarry C.M."/>
            <person name="Lippert R."/>
            <person name="Walenz B."/>
            <person name="Shatkay H."/>
            <person name="Dew I."/>
            <person name="Miller J.R."/>
            <person name="Flanigan M.J."/>
            <person name="Edwards N.J."/>
            <person name="Bolanos R."/>
            <person name="Fasulo D."/>
            <person name="Halldorsson B.V."/>
            <person name="Hannenhalli S."/>
            <person name="Turner R."/>
            <person name="Yooseph S."/>
            <person name="Lu F."/>
            <person name="Nusskern D.R."/>
            <person name="Shue B.C."/>
            <person name="Zheng X.H."/>
            <person name="Zhong F."/>
            <person name="Delcher A.L."/>
            <person name="Huson D.H."/>
            <person name="Kravitz S.A."/>
            <person name="Mouchard L."/>
            <person name="Reinert K."/>
            <person name="Remington K.A."/>
            <person name="Clark A.G."/>
            <person name="Waterman M.S."/>
            <person name="Eichler E.E."/>
            <person name="Adams M.D."/>
            <person name="Hunkapiller M.W."/>
            <person name="Myers E.W."/>
            <person name="Venter J.C."/>
        </authorList>
    </citation>
    <scope>NUCLEOTIDE SEQUENCE [LARGE SCALE GENOMIC DNA]</scope>
</reference>
<reference key="7">
    <citation type="journal article" date="2007" name="BMC Genomics">
        <title>The full-ORF clone resource of the German cDNA consortium.</title>
        <authorList>
            <person name="Bechtel S."/>
            <person name="Rosenfelder H."/>
            <person name="Duda A."/>
            <person name="Schmidt C.P."/>
            <person name="Ernst U."/>
            <person name="Wellenreuther R."/>
            <person name="Mehrle A."/>
            <person name="Schuster C."/>
            <person name="Bahr A."/>
            <person name="Bloecker H."/>
            <person name="Heubner D."/>
            <person name="Hoerlein A."/>
            <person name="Michel G."/>
            <person name="Wedler H."/>
            <person name="Koehrer K."/>
            <person name="Ottenwaelder B."/>
            <person name="Poustka A."/>
            <person name="Wiemann S."/>
            <person name="Schupp I."/>
        </authorList>
    </citation>
    <scope>NUCLEOTIDE SEQUENCE [LARGE SCALE MRNA] OF 418-967</scope>
    <source>
        <tissue>Melanoma</tissue>
    </source>
</reference>
<reference key="8">
    <citation type="journal article" date="2025" name="Matrix Biol.">
        <title>Cleavage of Cartilage Oligomeric Matrix Protein (COMP) by ADAMTS4 generates a neoepitope associated with osteoarthritis and other forms of degenerative joint disease.</title>
        <authorList>
            <person name="de Groot R."/>
            <person name="Folgado P.B."/>
            <person name="Yamamoto K."/>
            <person name="Martin D.R."/>
            <person name="Koch C.D."/>
            <person name="Debruin D."/>
            <person name="Blagg S."/>
            <person name="Minns A.F."/>
            <person name="Bhutada S."/>
            <person name="Ahnstroem J."/>
            <person name="Larkin J."/>
            <person name="Aspberg A."/>
            <person name="Oennerfjord P."/>
            <person name="Apte S.S."/>
            <person name="Santamaria S."/>
        </authorList>
    </citation>
    <scope>FUNCTION</scope>
</reference>
<reference key="9">
    <citation type="journal article" date="2007" name="J. Mol. Biol.">
        <title>Crystal structures of human ADAMTS-1 reveal a conserved catalytic domain and a disintegrin-like domain with a fold homologous to cysteine-rich domains.</title>
        <authorList>
            <person name="Gerhardt S."/>
            <person name="Hassall G."/>
            <person name="Hawtin P."/>
            <person name="McCall E."/>
            <person name="Flavell L."/>
            <person name="Minshull C."/>
            <person name="Hargreaves D."/>
            <person name="Ting A."/>
            <person name="Pauptit R.A."/>
            <person name="Parker A.E."/>
            <person name="Abbott W.M."/>
        </authorList>
    </citation>
    <scope>X-RAY CRYSTALLOGRAPHY (2.0 ANGSTROMS) OF 253-548 ALONE AND IN COMPLEX WITH INHIBITOR</scope>
    <scope>ACTIVE SITE</scope>
    <scope>COFACTOR</scope>
    <scope>ZINC-BINDING SITES</scope>
    <scope>CALCIUM-BINDING SITES</scope>
    <scope>DISULFIDE BONDS</scope>
</reference>
<keyword id="KW-0002">3D-structure</keyword>
<keyword id="KW-0106">Calcium</keyword>
<keyword id="KW-0165">Cleavage on pair of basic residues</keyword>
<keyword id="KW-1015">Disulfide bond</keyword>
<keyword id="KW-0272">Extracellular matrix</keyword>
<keyword id="KW-0325">Glycoprotein</keyword>
<keyword id="KW-0358">Heparin-binding</keyword>
<keyword id="KW-0378">Hydrolase</keyword>
<keyword id="KW-0479">Metal-binding</keyword>
<keyword id="KW-0482">Metalloprotease</keyword>
<keyword id="KW-0645">Protease</keyword>
<keyword id="KW-1267">Proteomics identification</keyword>
<keyword id="KW-1185">Reference proteome</keyword>
<keyword id="KW-0677">Repeat</keyword>
<keyword id="KW-0964">Secreted</keyword>
<keyword id="KW-0732">Signal</keyword>
<keyword id="KW-0862">Zinc</keyword>
<keyword id="KW-0865">Zymogen</keyword>
<evidence type="ECO:0000250" key="1"/>
<evidence type="ECO:0000250" key="2">
    <source>
        <dbReference type="UniProtKB" id="P97857"/>
    </source>
</evidence>
<evidence type="ECO:0000255" key="3"/>
<evidence type="ECO:0000255" key="4">
    <source>
        <dbReference type="PROSITE-ProRule" id="PRU00210"/>
    </source>
</evidence>
<evidence type="ECO:0000255" key="5">
    <source>
        <dbReference type="PROSITE-ProRule" id="PRU00276"/>
    </source>
</evidence>
<evidence type="ECO:0000255" key="6">
    <source>
        <dbReference type="PROSITE-ProRule" id="PRU10095"/>
    </source>
</evidence>
<evidence type="ECO:0000256" key="7">
    <source>
        <dbReference type="SAM" id="MobiDB-lite"/>
    </source>
</evidence>
<evidence type="ECO:0000269" key="8">
    <source>
    </source>
</evidence>
<evidence type="ECO:0000269" key="9">
    <source>
    </source>
</evidence>
<evidence type="ECO:0000269" key="10">
    <source>
    </source>
</evidence>
<evidence type="ECO:0000269" key="11">
    <source>
    </source>
</evidence>
<evidence type="ECO:0000269" key="12">
    <source ref="1"/>
</evidence>
<evidence type="ECO:0000305" key="13"/>
<evidence type="ECO:0007829" key="14">
    <source>
        <dbReference type="PDB" id="2JIH"/>
    </source>
</evidence>
<evidence type="ECO:0007829" key="15">
    <source>
        <dbReference type="PDB" id="2V4B"/>
    </source>
</evidence>
<comment type="function">
    <text evidence="2 8 11">Metalloprotease which cleaves aggrecan, a cartilage proteoglycan, at the '1938-Glu-|-Leu-1939' site (within the chondroitin sulfate attachment domain), and may be involved in its turnover (By similarity). Also cleaves COMP (PubMed:39672391). Has angiogenic inhibitor activity (PubMed:10438512). May play a critical role in follicular rupture (By similarity).</text>
</comment>
<comment type="cofactor">
    <cofactor evidence="10">
        <name>Zn(2+)</name>
        <dbReference type="ChEBI" id="CHEBI:29105"/>
    </cofactor>
    <text evidence="10">Binds 1 zinc ion per subunit.</text>
</comment>
<comment type="interaction">
    <interactant intactId="EBI-2511802">
        <id>Q9UHI8</id>
    </interactant>
    <interactant intactId="EBI-10171697">
        <id>Q6A162</id>
        <label>KRT40</label>
    </interactant>
    <organismsDiffer>false</organismsDiffer>
    <experiments>3</experiments>
</comment>
<comment type="interaction">
    <interactant intactId="EBI-2511802">
        <id>Q9UHI8</id>
    </interactant>
    <interactant intactId="EBI-10171774">
        <id>P60410</id>
        <label>KRTAP10-8</label>
    </interactant>
    <organismsDiffer>false</organismsDiffer>
    <experiments>3</experiments>
</comment>
<comment type="interaction">
    <interactant intactId="EBI-2511802">
        <id>Q9UHI8</id>
    </interactant>
    <interactant intactId="EBI-750973">
        <id>O00233</id>
        <label>PSMD9</label>
    </interactant>
    <organismsDiffer>false</organismsDiffer>
    <experiments>3</experiments>
</comment>
<comment type="interaction">
    <interactant intactId="EBI-2511802">
        <id>Q9UHI8</id>
    </interactant>
    <interactant intactId="EBI-25475900">
        <id>P0DTC8</id>
        <label>8</label>
    </interactant>
    <organismsDiffer>true</organismsDiffer>
    <experiments>3</experiments>
</comment>
<comment type="subcellular location">
    <subcellularLocation>
        <location evidence="1">Secreted</location>
        <location evidence="1">Extracellular space</location>
        <location evidence="1">Extracellular matrix</location>
    </subcellularLocation>
</comment>
<comment type="domain">
    <text>The spacer domain and the TSP type-1 domains are important for a tight interaction with the extracellular matrix.</text>
</comment>
<comment type="domain">
    <text>The conserved cysteine present in the cysteine-switch motif binds the catalytic zinc ion, thus inhibiting the enzyme. The dissociation of the cysteine from the zinc ion upon the activation-peptide release activates the enzyme.</text>
</comment>
<comment type="PTM">
    <text evidence="1">The precursor is cleaved by a furin endopeptidase.</text>
</comment>
<comment type="PTM">
    <text evidence="1">Glycosylated. Can be O-fucosylated by POFUT2 on a serine or a threonine residue found within the consensus sequence C1-X(2)-(S/T)-C2-G of the TSP type-1 repeat domains where C1 and C2 are the first and second cysteine residue of the repeat, respectively. Fucosylated repeats can then be further glycosylated by the addition of a beta-1,3-glucose residue by the glucosyltransferase, B3GALTL. Fucosylation mediates the efficient secretion of ADAMTS family members. Can also be C-glycosylated with one or two mannose molecules on tryptophan residues within the consensus sequence W-X-X-W of the TPRs, and N-glycosylated. These other glycosylations can also facilitate secretion (By similarity).</text>
</comment>
<comment type="sequence caution" evidence="13">
    <conflict type="erroneous initiation">
        <sequence resource="EMBL-CDS" id="AAD48080"/>
    </conflict>
</comment>
<comment type="sequence caution" evidence="13">
    <conflict type="erroneous initiation">
        <sequence resource="EMBL-CDS" id="BAA92584"/>
    </conflict>
</comment>
<comment type="online information" name="Atlas of Genetics and Cytogenetics in Oncology and Haematology">
    <link uri="https://atlasgeneticsoncology.org/gene/574/ADAMTS1"/>
</comment>
<protein>
    <recommendedName>
        <fullName>A disintegrin and metalloproteinase with thrombospondin motifs 1</fullName>
        <shortName>ADAM-TS 1</shortName>
        <shortName>ADAM-TS1</shortName>
        <shortName>ADAMTS-1</shortName>
        <ecNumber>3.4.24.-</ecNumber>
    </recommendedName>
    <alternativeName>
        <fullName>METH-1</fullName>
    </alternativeName>
</protein>
<name>ATS1_HUMAN</name>
<sequence length="967" mass="105358">MQRAVPEGFGRRKLGSDMGNAERAPGSRSFGPVPTLLLLAAALLAVSDALGRPSEEDEELVVPELERAPGHGTTRLRLHAFDQQLDLELRPDSSFLAPGFTLQNVGRKSGSETPLPETDLAHCFYSGTVNGDPSSAAALSLCEGVRGAFYLLGEAYFIQPLPAASERLATAAPGEKPPAPLQFHLLRRNRQGDVGGTCGVVDDEPRPTGKAETEDEDEGTEGEDEGAQWSPQDPALQGVGQPTGTGSIRKKRFVSSHRYVETMLVADQSMAEFHGSGLKHYLLTLFSVAARLYKHPSIRNSVSLVVVKILVIHDEQKGPEVTSNAALTLRNFCNWQKQHNPPSDRDAEHYDTAILFTRQDLCGSQTCDTLGMADVGTVCDPSRSCSVIEDDGLQAAFTTAHELGHVFNMPHDDAKQCASLNGVNQDSHMMASMLSNLDHSQPWSPCSAYMITSFLDNGHGECLMDKPQNPIQLPGDLPGTSYDANRQCQFTFGEDSKHCPDAASTCSTLWCTGTSGGVLVCQTKHFPWADGTSCGEGKWCINGKCVNKTDRKHFDTPFHGSWGMWGPWGDCSRTCGGGVQYTMRECDNPVPKNGGKYCEGKRVRYRSCNLEDCPDNNGKTFREEQCEAHNEFSKASFGSGPAVEWIPKYAGVSPKDRCKLICQAKGIGYFFVLQPKVVDGTPCSPDSTSVCVQGQCVKAGCDRIIDSKKKFDKCGVCGGNGSTCKKISGSVTSAKPGYHDIITIPTGATNIEVKQRNQRGSRNNGSFLAIKAADGTYILNGDYTLSTLEQDIMYKGVVLRYSGSSAALERIRSFSPLKEPLTIQVLTVGNALRPKIKYTYFVKKKKESFNAIPTFSAWVIEEWGECSKSCELGWQRRLVECRDINGQPASECAKEVKPASTRPCADHPCPQWQLGEWSSCSKTCGKGYKKRSLKCLSHDGGVLSHESCDPLKKPKHFIDFCTMAECS</sequence>
<feature type="signal peptide" evidence="3">
    <location>
        <begin position="1"/>
        <end position="49"/>
    </location>
</feature>
<feature type="propeptide" id="PRO_0000029150" evidence="1">
    <location>
        <begin position="50"/>
        <end position="252"/>
    </location>
</feature>
<feature type="chain" id="PRO_0000029151" description="A disintegrin and metalloproteinase with thrombospondin motifs 1">
    <location>
        <begin position="253"/>
        <end position="967"/>
    </location>
</feature>
<feature type="domain" description="Peptidase M12B" evidence="5">
    <location>
        <begin position="258"/>
        <end position="467"/>
    </location>
</feature>
<feature type="domain" description="Disintegrin">
    <location>
        <begin position="476"/>
        <end position="559"/>
    </location>
</feature>
<feature type="domain" description="TSP type-1 1" evidence="4">
    <location>
        <begin position="559"/>
        <end position="614"/>
    </location>
</feature>
<feature type="domain" description="TSP type-1 2" evidence="4">
    <location>
        <begin position="854"/>
        <end position="905"/>
    </location>
</feature>
<feature type="domain" description="TSP type-1 3" evidence="4">
    <location>
        <begin position="908"/>
        <end position="967"/>
    </location>
</feature>
<feature type="region of interest" description="Disordered" evidence="7">
    <location>
        <begin position="1"/>
        <end position="27"/>
    </location>
</feature>
<feature type="region of interest" description="Disordered" evidence="7">
    <location>
        <begin position="192"/>
        <end position="250"/>
    </location>
</feature>
<feature type="region of interest" description="Spacer">
    <location>
        <begin position="725"/>
        <end position="849"/>
    </location>
</feature>
<feature type="short sequence motif" description="Cysteine switch" evidence="1">
    <location>
        <begin position="196"/>
        <end position="203"/>
    </location>
</feature>
<feature type="compositionally biased region" description="Basic and acidic residues" evidence="7">
    <location>
        <begin position="203"/>
        <end position="212"/>
    </location>
</feature>
<feature type="compositionally biased region" description="Acidic residues" evidence="7">
    <location>
        <begin position="213"/>
        <end position="226"/>
    </location>
</feature>
<feature type="active site" evidence="5 6 10">
    <location>
        <position position="402"/>
    </location>
</feature>
<feature type="binding site" description="in inhibited form" evidence="1">
    <location>
        <position position="198"/>
    </location>
    <ligand>
        <name>Zn(2+)</name>
        <dbReference type="ChEBI" id="CHEBI:29105"/>
        <note>catalytic</note>
    </ligand>
</feature>
<feature type="binding site" evidence="10">
    <location>
        <position position="261"/>
    </location>
    <ligand>
        <name>Ca(2+)</name>
        <dbReference type="ChEBI" id="CHEBI:29108"/>
        <label>1</label>
    </ligand>
</feature>
<feature type="binding site" evidence="10">
    <location>
        <position position="261"/>
    </location>
    <ligand>
        <name>Ca(2+)</name>
        <dbReference type="ChEBI" id="CHEBI:29108"/>
        <label>2</label>
    </ligand>
</feature>
<feature type="binding site" evidence="10">
    <location>
        <position position="344"/>
    </location>
    <ligand>
        <name>Ca(2+)</name>
        <dbReference type="ChEBI" id="CHEBI:29108"/>
        <label>1</label>
    </ligand>
</feature>
<feature type="binding site" evidence="10">
    <location>
        <position position="344"/>
    </location>
    <ligand>
        <name>Ca(2+)</name>
        <dbReference type="ChEBI" id="CHEBI:29108"/>
        <label>2</label>
    </ligand>
</feature>
<feature type="binding site" evidence="10">
    <location>
        <position position="351"/>
    </location>
    <ligand>
        <name>Ca(2+)</name>
        <dbReference type="ChEBI" id="CHEBI:29108"/>
        <label>1</label>
    </ligand>
</feature>
<feature type="binding site" evidence="10">
    <location>
        <position position="401"/>
    </location>
    <ligand>
        <name>Zn(2+)</name>
        <dbReference type="ChEBI" id="CHEBI:29105"/>
        <note>catalytic</note>
    </ligand>
</feature>
<feature type="binding site" evidence="10">
    <location>
        <position position="405"/>
    </location>
    <ligand>
        <name>Zn(2+)</name>
        <dbReference type="ChEBI" id="CHEBI:29105"/>
        <note>catalytic</note>
    </ligand>
</feature>
<feature type="binding site" evidence="10">
    <location>
        <position position="411"/>
    </location>
    <ligand>
        <name>Zn(2+)</name>
        <dbReference type="ChEBI" id="CHEBI:29105"/>
        <note>catalytic</note>
    </ligand>
</feature>
<feature type="binding site" evidence="10">
    <location>
        <position position="462"/>
    </location>
    <ligand>
        <name>Ca(2+)</name>
        <dbReference type="ChEBI" id="CHEBI:29108"/>
        <label>1</label>
    </ligand>
</feature>
<feature type="binding site" evidence="10">
    <location>
        <position position="465"/>
    </location>
    <ligand>
        <name>Ca(2+)</name>
        <dbReference type="ChEBI" id="CHEBI:29108"/>
        <label>1</label>
    </ligand>
</feature>
<feature type="binding site" evidence="10">
    <location>
        <position position="465"/>
    </location>
    <ligand>
        <name>Ca(2+)</name>
        <dbReference type="ChEBI" id="CHEBI:29108"/>
        <label>2</label>
    </ligand>
</feature>
<feature type="glycosylation site" description="N-linked (GlcNAc...) asparagine" evidence="3">
    <location>
        <position position="547"/>
    </location>
</feature>
<feature type="glycosylation site" description="N-linked (GlcNAc...) asparagine" evidence="3">
    <location>
        <position position="720"/>
    </location>
</feature>
<feature type="glycosylation site" description="N-linked (GlcNAc...) asparagine" evidence="3">
    <location>
        <position position="764"/>
    </location>
</feature>
<feature type="disulfide bond" evidence="10">
    <location>
        <begin position="333"/>
        <end position="385"/>
    </location>
</feature>
<feature type="disulfide bond" evidence="10">
    <location>
        <begin position="362"/>
        <end position="367"/>
    </location>
</feature>
<feature type="disulfide bond" evidence="10">
    <location>
        <begin position="379"/>
        <end position="462"/>
    </location>
</feature>
<feature type="disulfide bond" evidence="10">
    <location>
        <begin position="417"/>
        <end position="446"/>
    </location>
</feature>
<feature type="disulfide bond" evidence="10">
    <location>
        <begin position="488"/>
        <end position="511"/>
    </location>
</feature>
<feature type="disulfide bond" evidence="10">
    <location>
        <begin position="499"/>
        <end position="521"/>
    </location>
</feature>
<feature type="disulfide bond" evidence="10">
    <location>
        <begin position="506"/>
        <end position="540"/>
    </location>
</feature>
<feature type="disulfide bond" evidence="10">
    <location>
        <begin position="534"/>
        <end position="545"/>
    </location>
</feature>
<feature type="disulfide bond" evidence="1">
    <location>
        <begin position="571"/>
        <end position="608"/>
    </location>
</feature>
<feature type="disulfide bond" evidence="1">
    <location>
        <begin position="575"/>
        <end position="613"/>
    </location>
</feature>
<feature type="disulfide bond" evidence="1">
    <location>
        <begin position="586"/>
        <end position="598"/>
    </location>
</feature>
<feature type="sequence variant" id="VAR_030001" description="In dbSNP:rs428785." evidence="8 9 12">
    <original>A</original>
    <variation>P</variation>
    <location>
        <position position="227"/>
    </location>
</feature>
<feature type="sequence conflict" description="In Ref. 1; AAF15317." evidence="13" ref="1">
    <original>Q</original>
    <variation>H</variation>
    <location>
        <position position="468"/>
    </location>
</feature>
<feature type="sequence conflict" description="In Ref. 1; AAF15317." evidence="13" ref="1">
    <original>S</original>
    <variation>N</variation>
    <location>
        <position position="561"/>
    </location>
</feature>
<feature type="strand" evidence="15">
    <location>
        <begin position="258"/>
        <end position="266"/>
    </location>
</feature>
<feature type="helix" evidence="15">
    <location>
        <begin position="268"/>
        <end position="274"/>
    </location>
</feature>
<feature type="helix" evidence="15">
    <location>
        <begin position="275"/>
        <end position="277"/>
    </location>
</feature>
<feature type="helix" evidence="15">
    <location>
        <begin position="278"/>
        <end position="293"/>
    </location>
</feature>
<feature type="helix" evidence="15">
    <location>
        <begin position="296"/>
        <end position="298"/>
    </location>
</feature>
<feature type="strand" evidence="15">
    <location>
        <begin position="302"/>
        <end position="311"/>
    </location>
</feature>
<feature type="helix" evidence="15">
    <location>
        <begin position="315"/>
        <end position="317"/>
    </location>
</feature>
<feature type="helix" evidence="15">
    <location>
        <begin position="325"/>
        <end position="336"/>
    </location>
</feature>
<feature type="helix" evidence="15">
    <location>
        <begin position="337"/>
        <end position="339"/>
    </location>
</feature>
<feature type="strand" evidence="15">
    <location>
        <begin position="351"/>
        <end position="359"/>
    </location>
</feature>
<feature type="strand" evidence="15">
    <location>
        <begin position="371"/>
        <end position="373"/>
    </location>
</feature>
<feature type="turn" evidence="15">
    <location>
        <begin position="381"/>
        <end position="383"/>
    </location>
</feature>
<feature type="strand" evidence="15">
    <location>
        <begin position="385"/>
        <end position="389"/>
    </location>
</feature>
<feature type="helix" evidence="15">
    <location>
        <begin position="395"/>
        <end position="406"/>
    </location>
</feature>
<feature type="helix" evidence="15">
    <location>
        <begin position="415"/>
        <end position="417"/>
    </location>
</feature>
<feature type="turn" evidence="15">
    <location>
        <begin position="418"/>
        <end position="420"/>
    </location>
</feature>
<feature type="helix" evidence="15">
    <location>
        <begin position="445"/>
        <end position="456"/>
    </location>
</feature>
<feature type="turn" evidence="15">
    <location>
        <begin position="457"/>
        <end position="460"/>
    </location>
</feature>
<feature type="helix" evidence="15">
    <location>
        <begin position="461"/>
        <end position="464"/>
    </location>
</feature>
<feature type="helix" evidence="15">
    <location>
        <begin position="478"/>
        <end position="481"/>
    </location>
</feature>
<feature type="helix" evidence="15">
    <location>
        <begin position="484"/>
        <end position="492"/>
    </location>
</feature>
<feature type="strand" evidence="14">
    <location>
        <begin position="510"/>
        <end position="513"/>
    </location>
</feature>
<feature type="strand" evidence="14">
    <location>
        <begin position="520"/>
        <end position="523"/>
    </location>
</feature>
<feature type="strand" evidence="15">
    <location>
        <begin position="538"/>
        <end position="541"/>
    </location>
</feature>
<feature type="strand" evidence="15">
    <location>
        <begin position="544"/>
        <end position="548"/>
    </location>
</feature>
<accession>Q9UHI8</accession>
<accession>D3DSD5</accession>
<accession>Q9NSJ8</accession>
<accession>Q9P2K0</accession>
<accession>Q9UH83</accession>
<accession>Q9UP80</accession>